<organism>
    <name type="scientific">Clostridium pasteurianum</name>
    <dbReference type="NCBI Taxonomy" id="1501"/>
    <lineage>
        <taxon>Bacteria</taxon>
        <taxon>Bacillati</taxon>
        <taxon>Bacillota</taxon>
        <taxon>Clostridia</taxon>
        <taxon>Eubacteriales</taxon>
        <taxon>Clostridiaceae</taxon>
        <taxon>Clostridium</taxon>
    </lineage>
</organism>
<dbReference type="EMBL" id="Z19005">
    <property type="protein sequence ID" value="CAA79493.1"/>
    <property type="molecule type" value="Genomic_DNA"/>
</dbReference>
<dbReference type="PIR" id="S34629">
    <property type="entry name" value="S34629"/>
</dbReference>
<dbReference type="InterPro" id="IPR014287">
    <property type="entry name" value="Nase_Fe-Fe_AnfO"/>
</dbReference>
<dbReference type="Pfam" id="PF09582">
    <property type="entry name" value="AnfO_nitrog"/>
    <property type="match status" value="1"/>
</dbReference>
<reference key="1">
    <citation type="journal article" date="1993" name="Biochem. Biophys. Res. Commun.">
        <title>Cloning and expression in Escherichia coli of the gene encoding the [2Fe-2S] ferredoxin from Clostridium pasteurianum.</title>
        <authorList>
            <person name="Fujinaga J."/>
            <person name="Meyer J."/>
        </authorList>
    </citation>
    <scope>NUCLEOTIDE SEQUENCE [GENOMIC DNA]</scope>
    <source>
        <strain>ATCC 6013 / DSM 525 / NCIB 9486 / VKM B-1774 / W5</strain>
    </source>
</reference>
<reference key="2">
    <citation type="journal article" date="1993" name="Biochim. Biophys. Acta">
        <title>Cloning and sequencing of the gene encoding the [2Fe-2S] ferredoxin from Clostridium pasteurianum.</title>
        <authorList>
            <person name="Meyer J."/>
        </authorList>
    </citation>
    <scope>NUCLEOTIDE SEQUENCE [GENOMIC DNA]</scope>
    <source>
        <strain>ATCC 6013 / DSM 525 / NCIB 9486 / VKM B-1774 / W5</strain>
    </source>
</reference>
<sequence>IPYSVLKKSGFVIAEADGNPEEFLDELMEMIIESKEKEAKRRKAQDTVIEPIALEKQGEYFINLERVQNNNPGISSKKILQPFLKNKPFRELKIVCNHIPKWIENELMTLGMKFEVKKLTEGEFEVKVYNQFNDEKTLVNR</sequence>
<protein>
    <recommendedName>
        <fullName>Uncharacterized protein in ferredoxin 2Fe-2S gene 3'region</fullName>
    </recommendedName>
</protein>
<name>YFE3_CLOPA</name>
<accession>Q04625</accession>
<proteinExistence type="predicted"/>
<feature type="chain" id="PRO_0000066209" description="Uncharacterized protein in ferredoxin 2Fe-2S gene 3'region">
    <location>
        <begin position="1" status="less than"/>
        <end position="141"/>
    </location>
</feature>
<feature type="non-terminal residue">
    <location>
        <position position="1"/>
    </location>
</feature>